<reference key="1">
    <citation type="journal article" date="2004" name="Genome Res.">
        <title>The status, quality, and expansion of the NIH full-length cDNA project: the Mammalian Gene Collection (MGC).</title>
        <authorList>
            <consortium name="The MGC Project Team"/>
        </authorList>
    </citation>
    <scope>NUCLEOTIDE SEQUENCE [LARGE SCALE MRNA]</scope>
</reference>
<reference key="2">
    <citation type="journal article" date="2016" name="J. Biol. Chem.">
        <title>Family-wide Characterization of Histone Binding Abilities of Human CW Domain-containing Proteins.</title>
        <authorList>
            <person name="Liu Y."/>
            <person name="Tempel W."/>
            <person name="Zhang Q."/>
            <person name="Liang X."/>
            <person name="Loppnau P."/>
            <person name="Qin S."/>
            <person name="Min J."/>
        </authorList>
    </citation>
    <scope>X-RAY CRYSTALLOGRAPHY (1.78 ANGSTROMS) OF 21-78 IN COMPLEX WITH THE AMINO TERMINUS OF HISTONE H3</scope>
    <scope>FUNCTION</scope>
    <scope>DOMAIN CW-TYPE ZINC FINGER</scope>
    <scope>MUTAGENESIS OF TRP-30; TRP-41 AND PHE-78</scope>
</reference>
<protein>
    <recommendedName>
        <fullName>Zinc finger CW-type PWWP domain protein 2</fullName>
    </recommendedName>
</protein>
<gene>
    <name type="primary">ZCWPW2</name>
</gene>
<keyword id="KW-0002">3D-structure</keyword>
<keyword id="KW-0479">Metal-binding</keyword>
<keyword id="KW-1185">Reference proteome</keyword>
<keyword id="KW-0862">Zinc</keyword>
<keyword id="KW-0863">Zinc-finger</keyword>
<comment type="function">
    <text evidence="4">Histone methylation reader which binds to non-methylated (H3K4me0), monomethylated (H3K4me1), dimethylated (H3K4me2) and trimethylated (H3K4me3) 'Lys-4' on histone H3 (PubMed:26933034). The order of binding preference is H3K4me3 &gt; H3K4me2 &gt; H3K4me1 &gt; H3K4me0 (PubMed:26933034).</text>
</comment>
<comment type="interaction">
    <interactant intactId="EBI-12274792">
        <id>Q504Y3</id>
    </interactant>
    <interactant intactId="EBI-7116203">
        <id>O75031</id>
        <label>HSF2BP</label>
    </interactant>
    <organismsDiffer>false</organismsDiffer>
    <experiments>3</experiments>
</comment>
<comment type="interaction">
    <interactant intactId="EBI-12274792">
        <id>Q504Y3</id>
    </interactant>
    <interactant intactId="EBI-348489">
        <id>P40425</id>
        <label>PBX2</label>
    </interactant>
    <organismsDiffer>false</organismsDiffer>
    <experiments>3</experiments>
</comment>
<comment type="domain">
    <text evidence="4">The CW-TYPE zinc finger mediates its binding to trimethylated histone H3K4me3.</text>
</comment>
<organism>
    <name type="scientific">Homo sapiens</name>
    <name type="common">Human</name>
    <dbReference type="NCBI Taxonomy" id="9606"/>
    <lineage>
        <taxon>Eukaryota</taxon>
        <taxon>Metazoa</taxon>
        <taxon>Chordata</taxon>
        <taxon>Craniata</taxon>
        <taxon>Vertebrata</taxon>
        <taxon>Euteleostomi</taxon>
        <taxon>Mammalia</taxon>
        <taxon>Eutheria</taxon>
        <taxon>Euarchontoglires</taxon>
        <taxon>Primates</taxon>
        <taxon>Haplorrhini</taxon>
        <taxon>Catarrhini</taxon>
        <taxon>Hominidae</taxon>
        <taxon>Homo</taxon>
    </lineage>
</organism>
<accession>Q504Y3</accession>
<name>ZCPW2_HUMAN</name>
<dbReference type="EMBL" id="BC094696">
    <property type="protein sequence ID" value="AAH94696.1"/>
    <property type="molecule type" value="mRNA"/>
</dbReference>
<dbReference type="CCDS" id="CCDS33723.1"/>
<dbReference type="RefSeq" id="NP_001035522.1">
    <property type="nucleotide sequence ID" value="NM_001040432.4"/>
</dbReference>
<dbReference type="RefSeq" id="NP_001311098.1">
    <property type="nucleotide sequence ID" value="NM_001324169.2"/>
</dbReference>
<dbReference type="RefSeq" id="XP_016861244.1">
    <property type="nucleotide sequence ID" value="XM_017005755.1"/>
</dbReference>
<dbReference type="PDB" id="4O62">
    <property type="method" value="X-ray"/>
    <property type="resolution" value="1.78 A"/>
    <property type="chains" value="A/B/C=21-78"/>
</dbReference>
<dbReference type="PDB" id="4Z0O">
    <property type="method" value="X-ray"/>
    <property type="resolution" value="1.57 A"/>
    <property type="chains" value="A=21-78"/>
</dbReference>
<dbReference type="PDB" id="4Z0R">
    <property type="method" value="X-ray"/>
    <property type="resolution" value="1.75 A"/>
    <property type="chains" value="A/B/C=21-78"/>
</dbReference>
<dbReference type="PDBsum" id="4O62"/>
<dbReference type="PDBsum" id="4Z0O"/>
<dbReference type="PDBsum" id="4Z0R"/>
<dbReference type="SMR" id="Q504Y3"/>
<dbReference type="BioGRID" id="127425">
    <property type="interactions" value="5"/>
</dbReference>
<dbReference type="FunCoup" id="Q504Y3">
    <property type="interactions" value="679"/>
</dbReference>
<dbReference type="IntAct" id="Q504Y3">
    <property type="interactions" value="2"/>
</dbReference>
<dbReference type="STRING" id="9606.ENSP00000373278"/>
<dbReference type="BioMuta" id="ZCWPW2"/>
<dbReference type="DMDM" id="74740233"/>
<dbReference type="PaxDb" id="9606-ENSP00000373278"/>
<dbReference type="Antibodypedia" id="27555">
    <property type="antibodies" value="27 antibodies from 11 providers"/>
</dbReference>
<dbReference type="DNASU" id="152098"/>
<dbReference type="Ensembl" id="ENST00000383768.7">
    <property type="protein sequence ID" value="ENSP00000373278.2"/>
    <property type="gene ID" value="ENSG00000206559.8"/>
</dbReference>
<dbReference type="GeneID" id="152098"/>
<dbReference type="KEGG" id="hsa:152098"/>
<dbReference type="MANE-Select" id="ENST00000383768.7">
    <property type="protein sequence ID" value="ENSP00000373278.2"/>
    <property type="RefSeq nucleotide sequence ID" value="NM_001040432.4"/>
    <property type="RefSeq protein sequence ID" value="NP_001035522.1"/>
</dbReference>
<dbReference type="UCSC" id="uc003ceh.4">
    <property type="organism name" value="human"/>
</dbReference>
<dbReference type="AGR" id="HGNC:23574"/>
<dbReference type="CTD" id="152098"/>
<dbReference type="DisGeNET" id="152098"/>
<dbReference type="GeneCards" id="ZCWPW2"/>
<dbReference type="HGNC" id="HGNC:23574">
    <property type="gene designation" value="ZCWPW2"/>
</dbReference>
<dbReference type="HPA" id="ENSG00000206559">
    <property type="expression patterns" value="Tissue enhanced (testis)"/>
</dbReference>
<dbReference type="neXtProt" id="NX_Q504Y3"/>
<dbReference type="OpenTargets" id="ENSG00000206559"/>
<dbReference type="PharmGKB" id="PA134888742"/>
<dbReference type="VEuPathDB" id="HostDB:ENSG00000206559"/>
<dbReference type="eggNOG" id="ENOG502QS46">
    <property type="taxonomic scope" value="Eukaryota"/>
</dbReference>
<dbReference type="GeneTree" id="ENSGT00560000077278"/>
<dbReference type="HOGENOM" id="CLU_077983_1_0_1"/>
<dbReference type="InParanoid" id="Q504Y3"/>
<dbReference type="OMA" id="HSRSWID"/>
<dbReference type="OrthoDB" id="757982at2759"/>
<dbReference type="PAN-GO" id="Q504Y3">
    <property type="GO annotations" value="2 GO annotations based on evolutionary models"/>
</dbReference>
<dbReference type="PhylomeDB" id="Q504Y3"/>
<dbReference type="TreeFam" id="TF318885"/>
<dbReference type="PathwayCommons" id="Q504Y3"/>
<dbReference type="SignaLink" id="Q504Y3"/>
<dbReference type="BioGRID-ORCS" id="152098">
    <property type="hits" value="22 hits in 1144 CRISPR screens"/>
</dbReference>
<dbReference type="ChiTaRS" id="ZCWPW2">
    <property type="organism name" value="human"/>
</dbReference>
<dbReference type="EvolutionaryTrace" id="Q504Y3"/>
<dbReference type="GenomeRNAi" id="152098"/>
<dbReference type="Pharos" id="Q504Y3">
    <property type="development level" value="Tdark"/>
</dbReference>
<dbReference type="PRO" id="PR:Q504Y3"/>
<dbReference type="Proteomes" id="UP000005640">
    <property type="component" value="Chromosome 3"/>
</dbReference>
<dbReference type="RNAct" id="Q504Y3">
    <property type="molecule type" value="protein"/>
</dbReference>
<dbReference type="Bgee" id="ENSG00000206559">
    <property type="expression patterns" value="Expressed in male germ line stem cell (sensu Vertebrata) in testis and 101 other cell types or tissues"/>
</dbReference>
<dbReference type="ExpressionAtlas" id="Q504Y3">
    <property type="expression patterns" value="baseline and differential"/>
</dbReference>
<dbReference type="GO" id="GO:0005634">
    <property type="term" value="C:nucleus"/>
    <property type="evidence" value="ECO:0000318"/>
    <property type="project" value="GO_Central"/>
</dbReference>
<dbReference type="GO" id="GO:0140002">
    <property type="term" value="F:histone H3K4me3 reader activity"/>
    <property type="evidence" value="ECO:0000314"/>
    <property type="project" value="UniProtKB"/>
</dbReference>
<dbReference type="GO" id="GO:0035064">
    <property type="term" value="F:methylated histone binding"/>
    <property type="evidence" value="ECO:0000318"/>
    <property type="project" value="GO_Central"/>
</dbReference>
<dbReference type="GO" id="GO:0008270">
    <property type="term" value="F:zinc ion binding"/>
    <property type="evidence" value="ECO:0007669"/>
    <property type="project" value="UniProtKB-KW"/>
</dbReference>
<dbReference type="CDD" id="cd20146">
    <property type="entry name" value="PWWP_ZCWPW2"/>
    <property type="match status" value="1"/>
</dbReference>
<dbReference type="Gene3D" id="2.30.30.140">
    <property type="match status" value="1"/>
</dbReference>
<dbReference type="Gene3D" id="3.30.40.100">
    <property type="match status" value="1"/>
</dbReference>
<dbReference type="InterPro" id="IPR000313">
    <property type="entry name" value="PWWP_dom"/>
</dbReference>
<dbReference type="InterPro" id="IPR042778">
    <property type="entry name" value="ZCWPW1/ZCWPW2"/>
</dbReference>
<dbReference type="InterPro" id="IPR011124">
    <property type="entry name" value="Znf_CW"/>
</dbReference>
<dbReference type="PANTHER" id="PTHR15999">
    <property type="entry name" value="ZINC FINGER CW-TYPE PWWP DOMAIN PROTEIN 1"/>
    <property type="match status" value="1"/>
</dbReference>
<dbReference type="PANTHER" id="PTHR15999:SF6">
    <property type="entry name" value="ZINC FINGER CW-TYPE PWWP DOMAIN PROTEIN 2"/>
    <property type="match status" value="1"/>
</dbReference>
<dbReference type="Pfam" id="PF00855">
    <property type="entry name" value="PWWP"/>
    <property type="match status" value="1"/>
</dbReference>
<dbReference type="Pfam" id="PF07496">
    <property type="entry name" value="zf-CW"/>
    <property type="match status" value="1"/>
</dbReference>
<dbReference type="SUPFAM" id="SSF63748">
    <property type="entry name" value="Tudor/PWWP/MBT"/>
    <property type="match status" value="1"/>
</dbReference>
<dbReference type="PROSITE" id="PS50812">
    <property type="entry name" value="PWWP"/>
    <property type="match status" value="1"/>
</dbReference>
<dbReference type="PROSITE" id="PS51050">
    <property type="entry name" value="ZF_CW"/>
    <property type="match status" value="1"/>
</dbReference>
<proteinExistence type="evidence at protein level"/>
<feature type="chain" id="PRO_0000286348" description="Zinc finger CW-type PWWP domain protein 2">
    <location>
        <begin position="1"/>
        <end position="356"/>
    </location>
</feature>
<feature type="domain" description="PWWP" evidence="1">
    <location>
        <begin position="98"/>
        <end position="162"/>
    </location>
</feature>
<feature type="zinc finger region" description="CW-type" evidence="2">
    <location>
        <begin position="24"/>
        <end position="79"/>
    </location>
</feature>
<feature type="region of interest" description="Disordered" evidence="3">
    <location>
        <begin position="279"/>
        <end position="307"/>
    </location>
</feature>
<feature type="binding site" evidence="2">
    <location>
        <position position="33"/>
    </location>
    <ligand>
        <name>Zn(2+)</name>
        <dbReference type="ChEBI" id="CHEBI:29105"/>
    </ligand>
</feature>
<feature type="binding site" evidence="2">
    <location>
        <position position="38"/>
    </location>
    <ligand>
        <name>Zn(2+)</name>
        <dbReference type="ChEBI" id="CHEBI:29105"/>
    </ligand>
</feature>
<feature type="binding site" evidence="2">
    <location>
        <position position="60"/>
    </location>
    <ligand>
        <name>Zn(2+)</name>
        <dbReference type="ChEBI" id="CHEBI:29105"/>
    </ligand>
</feature>
<feature type="binding site" evidence="2">
    <location>
        <position position="71"/>
    </location>
    <ligand>
        <name>Zn(2+)</name>
        <dbReference type="ChEBI" id="CHEBI:29105"/>
    </ligand>
</feature>
<feature type="sequence variant" id="VAR_051499" description="In dbSNP:rs1563656.">
    <original>L</original>
    <variation>Q</variation>
    <location>
        <position position="202"/>
    </location>
</feature>
<feature type="mutagenesis site" description="Reduced histone H3K4me3 binding." evidence="4">
    <original>W</original>
    <variation>A</variation>
    <variation>V</variation>
    <variation>L</variation>
    <variation>M</variation>
    <variation>G</variation>
    <variation>S</variation>
    <variation>T</variation>
    <variation>N</variation>
    <variation>Q</variation>
    <location>
        <position position="30"/>
    </location>
</feature>
<feature type="mutagenesis site" description="Significantly reduced histone H3K4me3 binding." evidence="4">
    <original>W</original>
    <variation>C</variation>
    <variation>D</variation>
    <variation>E</variation>
    <variation>H</variation>
    <variation>K</variation>
    <variation>R</variation>
    <location>
        <position position="30"/>
    </location>
</feature>
<feature type="mutagenesis site" description="Loss of histone H3K4me3 binding; when associated with F-41." evidence="4">
    <original>W</original>
    <variation>L</variation>
    <location>
        <position position="30"/>
    </location>
</feature>
<feature type="mutagenesis site" description="Loss of histone H3K4me3 binding; when associated with F-41." evidence="4">
    <original>W</original>
    <variation>M</variation>
    <location>
        <position position="30"/>
    </location>
</feature>
<feature type="mutagenesis site" description="Loss of histone H3K4me3 binding." evidence="4">
    <original>W</original>
    <variation>P</variation>
    <location>
        <position position="30"/>
    </location>
</feature>
<feature type="mutagenesis site" description="Significantly reduced histone H3K4me3 binding. Loss of histone H3K4me3 binding; when associated with L-30 or M-30." evidence="4">
    <original>W</original>
    <variation>F</variation>
    <location>
        <position position="41"/>
    </location>
</feature>
<feature type="mutagenesis site" description="Little effect on histone H3K4me3 binding." evidence="4">
    <original>F</original>
    <variation>S</variation>
    <variation>I</variation>
    <variation>P</variation>
    <variation>D</variation>
    <variation>E</variation>
    <variation>H</variation>
    <variation>R</variation>
    <variation>Q</variation>
    <location>
        <position position="78"/>
    </location>
</feature>
<feature type="mutagenesis site" description="Little effect on histone H3K4me3 binding." evidence="4">
    <location>
        <position position="78"/>
    </location>
</feature>
<feature type="strand" evidence="5">
    <location>
        <begin position="28"/>
        <end position="32"/>
    </location>
</feature>
<feature type="turn" evidence="5">
    <location>
        <begin position="36"/>
        <end position="38"/>
    </location>
</feature>
<feature type="strand" evidence="5">
    <location>
        <begin position="41"/>
        <end position="45"/>
    </location>
</feature>
<feature type="helix" evidence="5">
    <location>
        <begin position="46"/>
        <end position="50"/>
    </location>
</feature>
<feature type="helix" evidence="5">
    <location>
        <begin position="60"/>
        <end position="62"/>
    </location>
</feature>
<evidence type="ECO:0000255" key="1">
    <source>
        <dbReference type="PROSITE-ProRule" id="PRU00162"/>
    </source>
</evidence>
<evidence type="ECO:0000255" key="2">
    <source>
        <dbReference type="PROSITE-ProRule" id="PRU00454"/>
    </source>
</evidence>
<evidence type="ECO:0000256" key="3">
    <source>
        <dbReference type="SAM" id="MobiDB-lite"/>
    </source>
</evidence>
<evidence type="ECO:0000269" key="4">
    <source>
    </source>
</evidence>
<evidence type="ECO:0007829" key="5">
    <source>
        <dbReference type="PDB" id="4Z0O"/>
    </source>
</evidence>
<sequence length="356" mass="41376">MDKEKLDVKIEYCNYAMDSSVENMYVNKVWVQCENENCLKWRLLSSEDSAKVDHDEPWYCFMNTDSRYNNCSISEEDFPEESQLHQCGFKIVYSQLPLGSLVLVKLQNWPSWPGILCPDRFKGKYVTYDPDGNVEEYHIEFLGDPHSRSWIKATFVGHYSITLKPEKCKNKKKWYKSALQEACLLYGYSHEQRLEMCCLSKLQDKSETHDKVAALVKKRKQTSKNNIEKKKPKFRKRKRKAILKCSFENVYSDDALSKENRVVCETEVLLKELEQMLQQALQPTATPDESEEGHGEEINMGEKLSKCSPEAPAGSLFENHYEEDYLVIDGIKLKAGECIEDITNKFKEIDALMSEF</sequence>